<protein>
    <recommendedName>
        <fullName evidence="1">Imidazolonepropionase</fullName>
        <ecNumber evidence="1">3.5.2.7</ecNumber>
    </recommendedName>
    <alternativeName>
        <fullName evidence="1">Imidazolone-5-propionate hydrolase</fullName>
    </alternativeName>
</protein>
<sequence>MLDTLLINIGQLLTMDQEDGLLRREAMNTLPVIENGAVGIENGVITFVGTVEEAKGLQAKEVIDCGGKMVSPGLVDPHTHLVFGGSRENEIALKLQGVPYLEILEKGGGILSTVNATKQASKEELVQKAKFHLDRMLSFGVTTVEAKSGYGLDDETEWKQLEATAQLQKEHPIDLVSTFLGAHAVPKEYKGRSKEFLQWMLDLLPEMKEKQLAEFVDIFCETGVFSVEESKDFLLKAKELGFDVKIHADEIDPLGGAEAAAEIGAASADHLVGASDKGIEMLANSNTVATLLPGTTFYLNKESFARGRKMIDEGVAVALATDFNPGSCPTENIQLIMSIAMLKLKMTPEEVWNAVTVNSSYAINRGEVAGKIRVGRKADLVLWDAYNYAYVPYHYGVSHVNTVWKNGNIAYTRGEQSWSTATI</sequence>
<feature type="chain" id="PRO_0000306431" description="Imidazolonepropionase">
    <location>
        <begin position="1"/>
        <end position="423"/>
    </location>
</feature>
<feature type="binding site" evidence="1">
    <location>
        <position position="78"/>
    </location>
    <ligand>
        <name>Fe(3+)</name>
        <dbReference type="ChEBI" id="CHEBI:29034"/>
    </ligand>
</feature>
<feature type="binding site" evidence="1">
    <location>
        <position position="78"/>
    </location>
    <ligand>
        <name>Zn(2+)</name>
        <dbReference type="ChEBI" id="CHEBI:29105"/>
    </ligand>
</feature>
<feature type="binding site" evidence="1">
    <location>
        <position position="80"/>
    </location>
    <ligand>
        <name>Fe(3+)</name>
        <dbReference type="ChEBI" id="CHEBI:29034"/>
    </ligand>
</feature>
<feature type="binding site" evidence="1">
    <location>
        <position position="80"/>
    </location>
    <ligand>
        <name>Zn(2+)</name>
        <dbReference type="ChEBI" id="CHEBI:29105"/>
    </ligand>
</feature>
<feature type="binding site" evidence="1">
    <location>
        <position position="87"/>
    </location>
    <ligand>
        <name>4-imidazolone-5-propanoate</name>
        <dbReference type="ChEBI" id="CHEBI:77893"/>
    </ligand>
</feature>
<feature type="binding site" evidence="1">
    <location>
        <position position="150"/>
    </location>
    <ligand>
        <name>4-imidazolone-5-propanoate</name>
        <dbReference type="ChEBI" id="CHEBI:77893"/>
    </ligand>
</feature>
<feature type="binding site" evidence="1">
    <location>
        <position position="150"/>
    </location>
    <ligand>
        <name>N-formimidoyl-L-glutamate</name>
        <dbReference type="ChEBI" id="CHEBI:58928"/>
    </ligand>
</feature>
<feature type="binding site" evidence="1">
    <location>
        <position position="183"/>
    </location>
    <ligand>
        <name>4-imidazolone-5-propanoate</name>
        <dbReference type="ChEBI" id="CHEBI:77893"/>
    </ligand>
</feature>
<feature type="binding site" evidence="1">
    <location>
        <position position="247"/>
    </location>
    <ligand>
        <name>Fe(3+)</name>
        <dbReference type="ChEBI" id="CHEBI:29034"/>
    </ligand>
</feature>
<feature type="binding site" evidence="1">
    <location>
        <position position="247"/>
    </location>
    <ligand>
        <name>Zn(2+)</name>
        <dbReference type="ChEBI" id="CHEBI:29105"/>
    </ligand>
</feature>
<feature type="binding site" evidence="1">
    <location>
        <position position="250"/>
    </location>
    <ligand>
        <name>4-imidazolone-5-propanoate</name>
        <dbReference type="ChEBI" id="CHEBI:77893"/>
    </ligand>
</feature>
<feature type="binding site" evidence="1">
    <location>
        <position position="322"/>
    </location>
    <ligand>
        <name>Fe(3+)</name>
        <dbReference type="ChEBI" id="CHEBI:29034"/>
    </ligand>
</feature>
<feature type="binding site" evidence="1">
    <location>
        <position position="322"/>
    </location>
    <ligand>
        <name>Zn(2+)</name>
        <dbReference type="ChEBI" id="CHEBI:29105"/>
    </ligand>
</feature>
<feature type="binding site" evidence="1">
    <location>
        <position position="324"/>
    </location>
    <ligand>
        <name>N-formimidoyl-L-glutamate</name>
        <dbReference type="ChEBI" id="CHEBI:58928"/>
    </ligand>
</feature>
<feature type="binding site" evidence="1">
    <location>
        <position position="326"/>
    </location>
    <ligand>
        <name>N-formimidoyl-L-glutamate</name>
        <dbReference type="ChEBI" id="CHEBI:58928"/>
    </ligand>
</feature>
<feature type="binding site" evidence="1">
    <location>
        <position position="327"/>
    </location>
    <ligand>
        <name>4-imidazolone-5-propanoate</name>
        <dbReference type="ChEBI" id="CHEBI:77893"/>
    </ligand>
</feature>
<comment type="function">
    <text evidence="1">Catalyzes the hydrolytic cleavage of the carbon-nitrogen bond in imidazolone-5-propanoate to yield N-formimidoyl-L-glutamate. It is the third step in the universal histidine degradation pathway.</text>
</comment>
<comment type="catalytic activity">
    <reaction evidence="1">
        <text>4-imidazolone-5-propanoate + H2O = N-formimidoyl-L-glutamate</text>
        <dbReference type="Rhea" id="RHEA:23660"/>
        <dbReference type="ChEBI" id="CHEBI:15377"/>
        <dbReference type="ChEBI" id="CHEBI:58928"/>
        <dbReference type="ChEBI" id="CHEBI:77893"/>
        <dbReference type="EC" id="3.5.2.7"/>
    </reaction>
</comment>
<comment type="cofactor">
    <cofactor evidence="1">
        <name>Zn(2+)</name>
        <dbReference type="ChEBI" id="CHEBI:29105"/>
    </cofactor>
    <cofactor evidence="1">
        <name>Fe(3+)</name>
        <dbReference type="ChEBI" id="CHEBI:29034"/>
    </cofactor>
    <text evidence="1">Binds 1 zinc or iron ion per subunit.</text>
</comment>
<comment type="pathway">
    <text evidence="1">Amino-acid degradation; L-histidine degradation into L-glutamate; N-formimidoyl-L-glutamate from L-histidine: step 3/3.</text>
</comment>
<comment type="subcellular location">
    <subcellularLocation>
        <location evidence="1">Cytoplasm</location>
    </subcellularLocation>
</comment>
<comment type="similarity">
    <text evidence="1">Belongs to the metallo-dependent hydrolases superfamily. HutI family.</text>
</comment>
<gene>
    <name evidence="1" type="primary">hutI</name>
    <name type="ordered locus">BCE33L3352</name>
</gene>
<keyword id="KW-0963">Cytoplasm</keyword>
<keyword id="KW-0369">Histidine metabolism</keyword>
<keyword id="KW-0378">Hydrolase</keyword>
<keyword id="KW-0408">Iron</keyword>
<keyword id="KW-0479">Metal-binding</keyword>
<keyword id="KW-0862">Zinc</keyword>
<accession>Q637I0</accession>
<organism>
    <name type="scientific">Bacillus cereus (strain ZK / E33L)</name>
    <dbReference type="NCBI Taxonomy" id="288681"/>
    <lineage>
        <taxon>Bacteria</taxon>
        <taxon>Bacillati</taxon>
        <taxon>Bacillota</taxon>
        <taxon>Bacilli</taxon>
        <taxon>Bacillales</taxon>
        <taxon>Bacillaceae</taxon>
        <taxon>Bacillus</taxon>
        <taxon>Bacillus cereus group</taxon>
    </lineage>
</organism>
<evidence type="ECO:0000255" key="1">
    <source>
        <dbReference type="HAMAP-Rule" id="MF_00372"/>
    </source>
</evidence>
<proteinExistence type="inferred from homology"/>
<reference key="1">
    <citation type="journal article" date="2006" name="J. Bacteriol.">
        <title>Pathogenomic sequence analysis of Bacillus cereus and Bacillus thuringiensis isolates closely related to Bacillus anthracis.</title>
        <authorList>
            <person name="Han C.S."/>
            <person name="Xie G."/>
            <person name="Challacombe J.F."/>
            <person name="Altherr M.R."/>
            <person name="Bhotika S.S."/>
            <person name="Bruce D."/>
            <person name="Campbell C.S."/>
            <person name="Campbell M.L."/>
            <person name="Chen J."/>
            <person name="Chertkov O."/>
            <person name="Cleland C."/>
            <person name="Dimitrijevic M."/>
            <person name="Doggett N.A."/>
            <person name="Fawcett J.J."/>
            <person name="Glavina T."/>
            <person name="Goodwin L.A."/>
            <person name="Hill K.K."/>
            <person name="Hitchcock P."/>
            <person name="Jackson P.J."/>
            <person name="Keim P."/>
            <person name="Kewalramani A.R."/>
            <person name="Longmire J."/>
            <person name="Lucas S."/>
            <person name="Malfatti S."/>
            <person name="McMurry K."/>
            <person name="Meincke L.J."/>
            <person name="Misra M."/>
            <person name="Moseman B.L."/>
            <person name="Mundt M."/>
            <person name="Munk A.C."/>
            <person name="Okinaka R.T."/>
            <person name="Parson-Quintana B."/>
            <person name="Reilly L.P."/>
            <person name="Richardson P."/>
            <person name="Robinson D.L."/>
            <person name="Rubin E."/>
            <person name="Saunders E."/>
            <person name="Tapia R."/>
            <person name="Tesmer J.G."/>
            <person name="Thayer N."/>
            <person name="Thompson L.S."/>
            <person name="Tice H."/>
            <person name="Ticknor L.O."/>
            <person name="Wills P.L."/>
            <person name="Brettin T.S."/>
            <person name="Gilna P."/>
        </authorList>
    </citation>
    <scope>NUCLEOTIDE SEQUENCE [LARGE SCALE GENOMIC DNA]</scope>
    <source>
        <strain>ZK / E33L</strain>
    </source>
</reference>
<name>HUTI_BACCZ</name>
<dbReference type="EC" id="3.5.2.7" evidence="1"/>
<dbReference type="EMBL" id="CP000001">
    <property type="protein sequence ID" value="AAU16911.1"/>
    <property type="molecule type" value="Genomic_DNA"/>
</dbReference>
<dbReference type="RefSeq" id="WP_000887543.1">
    <property type="nucleotide sequence ID" value="NZ_CP009968.1"/>
</dbReference>
<dbReference type="SMR" id="Q637I0"/>
<dbReference type="KEGG" id="bcz:BCE33L3352"/>
<dbReference type="PATRIC" id="fig|288681.22.peg.2071"/>
<dbReference type="UniPathway" id="UPA00379">
    <property type="reaction ID" value="UER00551"/>
</dbReference>
<dbReference type="Proteomes" id="UP000002612">
    <property type="component" value="Chromosome"/>
</dbReference>
<dbReference type="GO" id="GO:0005737">
    <property type="term" value="C:cytoplasm"/>
    <property type="evidence" value="ECO:0007669"/>
    <property type="project" value="UniProtKB-SubCell"/>
</dbReference>
<dbReference type="GO" id="GO:0050480">
    <property type="term" value="F:imidazolonepropionase activity"/>
    <property type="evidence" value="ECO:0007669"/>
    <property type="project" value="UniProtKB-UniRule"/>
</dbReference>
<dbReference type="GO" id="GO:0005506">
    <property type="term" value="F:iron ion binding"/>
    <property type="evidence" value="ECO:0007669"/>
    <property type="project" value="UniProtKB-UniRule"/>
</dbReference>
<dbReference type="GO" id="GO:0008270">
    <property type="term" value="F:zinc ion binding"/>
    <property type="evidence" value="ECO:0007669"/>
    <property type="project" value="UniProtKB-UniRule"/>
</dbReference>
<dbReference type="GO" id="GO:0019556">
    <property type="term" value="P:L-histidine catabolic process to glutamate and formamide"/>
    <property type="evidence" value="ECO:0007669"/>
    <property type="project" value="UniProtKB-UniPathway"/>
</dbReference>
<dbReference type="GO" id="GO:0019557">
    <property type="term" value="P:L-histidine catabolic process to glutamate and formate"/>
    <property type="evidence" value="ECO:0007669"/>
    <property type="project" value="UniProtKB-UniPathway"/>
</dbReference>
<dbReference type="CDD" id="cd01296">
    <property type="entry name" value="Imidazolone-5PH"/>
    <property type="match status" value="1"/>
</dbReference>
<dbReference type="FunFam" id="3.20.20.140:FF:000007">
    <property type="entry name" value="Imidazolonepropionase"/>
    <property type="match status" value="1"/>
</dbReference>
<dbReference type="Gene3D" id="3.20.20.140">
    <property type="entry name" value="Metal-dependent hydrolases"/>
    <property type="match status" value="1"/>
</dbReference>
<dbReference type="Gene3D" id="2.30.40.10">
    <property type="entry name" value="Urease, subunit C, domain 1"/>
    <property type="match status" value="1"/>
</dbReference>
<dbReference type="HAMAP" id="MF_00372">
    <property type="entry name" value="HutI"/>
    <property type="match status" value="1"/>
</dbReference>
<dbReference type="InterPro" id="IPR006680">
    <property type="entry name" value="Amidohydro-rel"/>
</dbReference>
<dbReference type="InterPro" id="IPR005920">
    <property type="entry name" value="HutI"/>
</dbReference>
<dbReference type="InterPro" id="IPR011059">
    <property type="entry name" value="Metal-dep_hydrolase_composite"/>
</dbReference>
<dbReference type="InterPro" id="IPR032466">
    <property type="entry name" value="Metal_Hydrolase"/>
</dbReference>
<dbReference type="NCBIfam" id="TIGR01224">
    <property type="entry name" value="hutI"/>
    <property type="match status" value="1"/>
</dbReference>
<dbReference type="PANTHER" id="PTHR42752">
    <property type="entry name" value="IMIDAZOLONEPROPIONASE"/>
    <property type="match status" value="1"/>
</dbReference>
<dbReference type="PANTHER" id="PTHR42752:SF1">
    <property type="entry name" value="IMIDAZOLONEPROPIONASE-RELATED"/>
    <property type="match status" value="1"/>
</dbReference>
<dbReference type="Pfam" id="PF01979">
    <property type="entry name" value="Amidohydro_1"/>
    <property type="match status" value="1"/>
</dbReference>
<dbReference type="SUPFAM" id="SSF51338">
    <property type="entry name" value="Composite domain of metallo-dependent hydrolases"/>
    <property type="match status" value="1"/>
</dbReference>
<dbReference type="SUPFAM" id="SSF51556">
    <property type="entry name" value="Metallo-dependent hydrolases"/>
    <property type="match status" value="1"/>
</dbReference>